<reference key="1">
    <citation type="journal article" date="2008" name="J. Bacteriol.">
        <title>The pangenome structure of Escherichia coli: comparative genomic analysis of E. coli commensal and pathogenic isolates.</title>
        <authorList>
            <person name="Rasko D.A."/>
            <person name="Rosovitz M.J."/>
            <person name="Myers G.S.A."/>
            <person name="Mongodin E.F."/>
            <person name="Fricke W.F."/>
            <person name="Gajer P."/>
            <person name="Crabtree J."/>
            <person name="Sebaihia M."/>
            <person name="Thomson N.R."/>
            <person name="Chaudhuri R."/>
            <person name="Henderson I.R."/>
            <person name="Sperandio V."/>
            <person name="Ravel J."/>
        </authorList>
    </citation>
    <scope>NUCLEOTIDE SEQUENCE [LARGE SCALE GENOMIC DNA]</scope>
    <source>
        <strain>E24377A / ETEC</strain>
    </source>
</reference>
<feature type="chain" id="PRO_1000058626" description="Probable malate:quinone oxidoreductase">
    <location>
        <begin position="1"/>
        <end position="548"/>
    </location>
</feature>
<feature type="region of interest" description="Disordered" evidence="2">
    <location>
        <begin position="521"/>
        <end position="548"/>
    </location>
</feature>
<feature type="compositionally biased region" description="Low complexity" evidence="2">
    <location>
        <begin position="530"/>
        <end position="541"/>
    </location>
</feature>
<evidence type="ECO:0000255" key="1">
    <source>
        <dbReference type="HAMAP-Rule" id="MF_00212"/>
    </source>
</evidence>
<evidence type="ECO:0000256" key="2">
    <source>
        <dbReference type="SAM" id="MobiDB-lite"/>
    </source>
</evidence>
<sequence length="548" mass="60245">MKKVTAMLFSMAVGLNAVSMAAKAKASEEQETDVLLIGGGIMSATLGTYLRELEPEWSMTMVERLEGVAQESSNGWNNAGTGHSALMELNYTPQNADGSISIEKAVAINEAFQISRQFWAHQVERGVLRTPRSFINTVPHMSFVWGEDNVNFLRARYAALQQSSLFRGMRYSEDHAQIKEWAPLVMEGRDPQQKVAATRTEIGTDVNYGEITRQLIASLQKKSNFSLQLSSEVRALKRNDDNTWTVTVADLKNGTAQNIRAKFVFIGAGGAALKLLQESGIPEAKDYAGFPVGGQFLVSENPDVVNHHLAKVYGKASVGAPPMSVPHIDTRVLDGKRVVLFGPFATFSTKFLKNGSLWDLMSSTTTSNVMPMMHVGLDNFDLVKYLVSQVMLSEEDRFEALKEYYPQAKKEDWRLWQAGQRVQIIKRDAEKGGVLRLGTEVVSDQQGTIAALLGASPGASTAAPIMLDLLEKVFGDRVSSPQWQATLKAIVPSYGRKLNGDVAATERELQYTSEVLGLKYDKPQAADSTPKPQLKPQPVQKEVADIAL</sequence>
<gene>
    <name evidence="1" type="primary">mqo</name>
    <name type="ordered locus">EcE24377A_2509</name>
</gene>
<dbReference type="EC" id="1.1.5.4" evidence="1"/>
<dbReference type="EMBL" id="CP000800">
    <property type="protein sequence ID" value="ABV19416.1"/>
    <property type="molecule type" value="Genomic_DNA"/>
</dbReference>
<dbReference type="RefSeq" id="WP_000758074.1">
    <property type="nucleotide sequence ID" value="NC_009801.1"/>
</dbReference>
<dbReference type="SMR" id="A7ZP32"/>
<dbReference type="GeneID" id="75206462"/>
<dbReference type="KEGG" id="ecw:EcE24377A_2509"/>
<dbReference type="HOGENOM" id="CLU_028151_0_0_6"/>
<dbReference type="UniPathway" id="UPA00223">
    <property type="reaction ID" value="UER01008"/>
</dbReference>
<dbReference type="Proteomes" id="UP000001122">
    <property type="component" value="Chromosome"/>
</dbReference>
<dbReference type="GO" id="GO:0047545">
    <property type="term" value="F:2-hydroxyglutarate dehydrogenase activity"/>
    <property type="evidence" value="ECO:0007669"/>
    <property type="project" value="TreeGrafter"/>
</dbReference>
<dbReference type="GO" id="GO:0008924">
    <property type="term" value="F:L-malate dehydrogenase (quinone) activity"/>
    <property type="evidence" value="ECO:0007669"/>
    <property type="project" value="UniProtKB-UniRule"/>
</dbReference>
<dbReference type="GO" id="GO:0006099">
    <property type="term" value="P:tricarboxylic acid cycle"/>
    <property type="evidence" value="ECO:0007669"/>
    <property type="project" value="UniProtKB-UniRule"/>
</dbReference>
<dbReference type="Gene3D" id="3.30.9.10">
    <property type="entry name" value="D-Amino Acid Oxidase, subunit A, domain 2"/>
    <property type="match status" value="1"/>
</dbReference>
<dbReference type="Gene3D" id="3.50.50.60">
    <property type="entry name" value="FAD/NAD(P)-binding domain"/>
    <property type="match status" value="1"/>
</dbReference>
<dbReference type="HAMAP" id="MF_00212">
    <property type="entry name" value="MQO"/>
    <property type="match status" value="1"/>
</dbReference>
<dbReference type="InterPro" id="IPR036188">
    <property type="entry name" value="FAD/NAD-bd_sf"/>
</dbReference>
<dbReference type="InterPro" id="IPR006231">
    <property type="entry name" value="MQO"/>
</dbReference>
<dbReference type="NCBIfam" id="TIGR01320">
    <property type="entry name" value="mal_quin_oxido"/>
    <property type="match status" value="1"/>
</dbReference>
<dbReference type="NCBIfam" id="NF003603">
    <property type="entry name" value="PRK05257.1-1"/>
    <property type="match status" value="1"/>
</dbReference>
<dbReference type="NCBIfam" id="NF003605">
    <property type="entry name" value="PRK05257.1-4"/>
    <property type="match status" value="1"/>
</dbReference>
<dbReference type="NCBIfam" id="NF003606">
    <property type="entry name" value="PRK05257.2-1"/>
    <property type="match status" value="1"/>
</dbReference>
<dbReference type="NCBIfam" id="NF003608">
    <property type="entry name" value="PRK05257.2-4"/>
    <property type="match status" value="1"/>
</dbReference>
<dbReference type="NCBIfam" id="NF003611">
    <property type="entry name" value="PRK05257.3-2"/>
    <property type="match status" value="1"/>
</dbReference>
<dbReference type="NCBIfam" id="NF009875">
    <property type="entry name" value="PRK13339.1"/>
    <property type="match status" value="1"/>
</dbReference>
<dbReference type="PANTHER" id="PTHR43104">
    <property type="entry name" value="L-2-HYDROXYGLUTARATE DEHYDROGENASE, MITOCHONDRIAL"/>
    <property type="match status" value="1"/>
</dbReference>
<dbReference type="PANTHER" id="PTHR43104:SF2">
    <property type="entry name" value="L-2-HYDROXYGLUTARATE DEHYDROGENASE, MITOCHONDRIAL"/>
    <property type="match status" value="1"/>
</dbReference>
<dbReference type="Pfam" id="PF06039">
    <property type="entry name" value="Mqo"/>
    <property type="match status" value="1"/>
</dbReference>
<dbReference type="SUPFAM" id="SSF51905">
    <property type="entry name" value="FAD/NAD(P)-binding domain"/>
    <property type="match status" value="1"/>
</dbReference>
<comment type="catalytic activity">
    <reaction evidence="1">
        <text>(S)-malate + a quinone = a quinol + oxaloacetate</text>
        <dbReference type="Rhea" id="RHEA:46012"/>
        <dbReference type="ChEBI" id="CHEBI:15589"/>
        <dbReference type="ChEBI" id="CHEBI:16452"/>
        <dbReference type="ChEBI" id="CHEBI:24646"/>
        <dbReference type="ChEBI" id="CHEBI:132124"/>
        <dbReference type="EC" id="1.1.5.4"/>
    </reaction>
</comment>
<comment type="cofactor">
    <cofactor evidence="1">
        <name>FAD</name>
        <dbReference type="ChEBI" id="CHEBI:57692"/>
    </cofactor>
</comment>
<comment type="pathway">
    <text evidence="1">Carbohydrate metabolism; tricarboxylic acid cycle; oxaloacetate from (S)-malate (quinone route): step 1/1.</text>
</comment>
<comment type="similarity">
    <text evidence="1">Belongs to the MQO family.</text>
</comment>
<organism>
    <name type="scientific">Escherichia coli O139:H28 (strain E24377A / ETEC)</name>
    <dbReference type="NCBI Taxonomy" id="331111"/>
    <lineage>
        <taxon>Bacteria</taxon>
        <taxon>Pseudomonadati</taxon>
        <taxon>Pseudomonadota</taxon>
        <taxon>Gammaproteobacteria</taxon>
        <taxon>Enterobacterales</taxon>
        <taxon>Enterobacteriaceae</taxon>
        <taxon>Escherichia</taxon>
    </lineage>
</organism>
<keyword id="KW-0274">FAD</keyword>
<keyword id="KW-0285">Flavoprotein</keyword>
<keyword id="KW-0560">Oxidoreductase</keyword>
<keyword id="KW-1185">Reference proteome</keyword>
<keyword id="KW-0816">Tricarboxylic acid cycle</keyword>
<protein>
    <recommendedName>
        <fullName evidence="1">Probable malate:quinone oxidoreductase</fullName>
        <ecNumber evidence="1">1.1.5.4</ecNumber>
    </recommendedName>
    <alternativeName>
        <fullName evidence="1">MQO</fullName>
    </alternativeName>
    <alternativeName>
        <fullName evidence="1">Malate dehydrogenase [quinone]</fullName>
    </alternativeName>
</protein>
<name>MQO_ECO24</name>
<accession>A7ZP32</accession>
<proteinExistence type="inferred from homology"/>